<dbReference type="EC" id="6.3.4.5" evidence="1"/>
<dbReference type="EMBL" id="AE014295">
    <property type="protein sequence ID" value="AAN24866.1"/>
    <property type="molecule type" value="Genomic_DNA"/>
</dbReference>
<dbReference type="RefSeq" id="NP_696230.1">
    <property type="nucleotide sequence ID" value="NC_004307.2"/>
</dbReference>
<dbReference type="RefSeq" id="WP_011068275.1">
    <property type="nucleotide sequence ID" value="NC_004307.2"/>
</dbReference>
<dbReference type="SMR" id="Q8G5F2"/>
<dbReference type="STRING" id="206672.BL1058"/>
<dbReference type="EnsemblBacteria" id="AAN24866">
    <property type="protein sequence ID" value="AAN24866"/>
    <property type="gene ID" value="BL1058"/>
</dbReference>
<dbReference type="KEGG" id="blo:BL1058"/>
<dbReference type="PATRIC" id="fig|206672.9.peg.765"/>
<dbReference type="HOGENOM" id="CLU_032784_4_2_11"/>
<dbReference type="OrthoDB" id="9801641at2"/>
<dbReference type="PhylomeDB" id="Q8G5F2"/>
<dbReference type="UniPathway" id="UPA00068">
    <property type="reaction ID" value="UER00113"/>
</dbReference>
<dbReference type="Proteomes" id="UP000000439">
    <property type="component" value="Chromosome"/>
</dbReference>
<dbReference type="GO" id="GO:0005737">
    <property type="term" value="C:cytoplasm"/>
    <property type="evidence" value="ECO:0007669"/>
    <property type="project" value="UniProtKB-SubCell"/>
</dbReference>
<dbReference type="GO" id="GO:0004055">
    <property type="term" value="F:argininosuccinate synthase activity"/>
    <property type="evidence" value="ECO:0007669"/>
    <property type="project" value="UniProtKB-UniRule"/>
</dbReference>
<dbReference type="GO" id="GO:0005524">
    <property type="term" value="F:ATP binding"/>
    <property type="evidence" value="ECO:0007669"/>
    <property type="project" value="UniProtKB-UniRule"/>
</dbReference>
<dbReference type="GO" id="GO:0000053">
    <property type="term" value="P:argininosuccinate metabolic process"/>
    <property type="evidence" value="ECO:0007669"/>
    <property type="project" value="TreeGrafter"/>
</dbReference>
<dbReference type="GO" id="GO:0006526">
    <property type="term" value="P:L-arginine biosynthetic process"/>
    <property type="evidence" value="ECO:0007669"/>
    <property type="project" value="UniProtKB-UniRule"/>
</dbReference>
<dbReference type="GO" id="GO:0000050">
    <property type="term" value="P:urea cycle"/>
    <property type="evidence" value="ECO:0007669"/>
    <property type="project" value="TreeGrafter"/>
</dbReference>
<dbReference type="CDD" id="cd01999">
    <property type="entry name" value="ASS"/>
    <property type="match status" value="1"/>
</dbReference>
<dbReference type="FunFam" id="3.40.50.620:FF:000038">
    <property type="entry name" value="Argininosuccinate synthase"/>
    <property type="match status" value="1"/>
</dbReference>
<dbReference type="FunFam" id="3.90.1260.10:FF:000007">
    <property type="entry name" value="Argininosuccinate synthase"/>
    <property type="match status" value="1"/>
</dbReference>
<dbReference type="Gene3D" id="3.90.1260.10">
    <property type="entry name" value="Argininosuccinate synthetase, chain A, domain 2"/>
    <property type="match status" value="1"/>
</dbReference>
<dbReference type="Gene3D" id="3.40.50.620">
    <property type="entry name" value="HUPs"/>
    <property type="match status" value="1"/>
</dbReference>
<dbReference type="Gene3D" id="1.20.5.470">
    <property type="entry name" value="Single helix bin"/>
    <property type="match status" value="1"/>
</dbReference>
<dbReference type="HAMAP" id="MF_00005">
    <property type="entry name" value="Arg_succ_synth_type1"/>
    <property type="match status" value="1"/>
</dbReference>
<dbReference type="InterPro" id="IPR048268">
    <property type="entry name" value="Arginosuc_syn_C"/>
</dbReference>
<dbReference type="InterPro" id="IPR048267">
    <property type="entry name" value="Arginosuc_syn_N"/>
</dbReference>
<dbReference type="InterPro" id="IPR001518">
    <property type="entry name" value="Arginosuc_synth"/>
</dbReference>
<dbReference type="InterPro" id="IPR018223">
    <property type="entry name" value="Arginosuc_synth_CS"/>
</dbReference>
<dbReference type="InterPro" id="IPR023434">
    <property type="entry name" value="Arginosuc_synth_type_1_subfam"/>
</dbReference>
<dbReference type="InterPro" id="IPR024074">
    <property type="entry name" value="AS_cat/multimer_dom_body"/>
</dbReference>
<dbReference type="InterPro" id="IPR014729">
    <property type="entry name" value="Rossmann-like_a/b/a_fold"/>
</dbReference>
<dbReference type="NCBIfam" id="TIGR00032">
    <property type="entry name" value="argG"/>
    <property type="match status" value="1"/>
</dbReference>
<dbReference type="NCBIfam" id="NF001770">
    <property type="entry name" value="PRK00509.1"/>
    <property type="match status" value="1"/>
</dbReference>
<dbReference type="PANTHER" id="PTHR11587">
    <property type="entry name" value="ARGININOSUCCINATE SYNTHASE"/>
    <property type="match status" value="1"/>
</dbReference>
<dbReference type="PANTHER" id="PTHR11587:SF2">
    <property type="entry name" value="ARGININOSUCCINATE SYNTHASE"/>
    <property type="match status" value="1"/>
</dbReference>
<dbReference type="Pfam" id="PF20979">
    <property type="entry name" value="Arginosuc_syn_C"/>
    <property type="match status" value="1"/>
</dbReference>
<dbReference type="Pfam" id="PF00764">
    <property type="entry name" value="Arginosuc_synth"/>
    <property type="match status" value="1"/>
</dbReference>
<dbReference type="SUPFAM" id="SSF52402">
    <property type="entry name" value="Adenine nucleotide alpha hydrolases-like"/>
    <property type="match status" value="1"/>
</dbReference>
<dbReference type="SUPFAM" id="SSF69864">
    <property type="entry name" value="Argininosuccinate synthetase, C-terminal domain"/>
    <property type="match status" value="1"/>
</dbReference>
<dbReference type="PROSITE" id="PS00564">
    <property type="entry name" value="ARGININOSUCCIN_SYN_1"/>
    <property type="match status" value="1"/>
</dbReference>
<dbReference type="PROSITE" id="PS00565">
    <property type="entry name" value="ARGININOSUCCIN_SYN_2"/>
    <property type="match status" value="1"/>
</dbReference>
<feature type="chain" id="PRO_0000148573" description="Argininosuccinate synthase">
    <location>
        <begin position="1"/>
        <end position="412"/>
    </location>
</feature>
<feature type="binding site" evidence="1">
    <location>
        <begin position="10"/>
        <end position="18"/>
    </location>
    <ligand>
        <name>ATP</name>
        <dbReference type="ChEBI" id="CHEBI:30616"/>
    </ligand>
</feature>
<feature type="binding site" evidence="1">
    <location>
        <position position="89"/>
    </location>
    <ligand>
        <name>L-citrulline</name>
        <dbReference type="ChEBI" id="CHEBI:57743"/>
    </ligand>
</feature>
<feature type="binding site" evidence="1">
    <location>
        <position position="119"/>
    </location>
    <ligand>
        <name>ATP</name>
        <dbReference type="ChEBI" id="CHEBI:30616"/>
    </ligand>
</feature>
<feature type="binding site" evidence="1">
    <location>
        <position position="121"/>
    </location>
    <ligand>
        <name>L-aspartate</name>
        <dbReference type="ChEBI" id="CHEBI:29991"/>
    </ligand>
</feature>
<feature type="binding site" evidence="1">
    <location>
        <position position="125"/>
    </location>
    <ligand>
        <name>L-aspartate</name>
        <dbReference type="ChEBI" id="CHEBI:29991"/>
    </ligand>
</feature>
<feature type="binding site" evidence="1">
    <location>
        <position position="125"/>
    </location>
    <ligand>
        <name>L-citrulline</name>
        <dbReference type="ChEBI" id="CHEBI:57743"/>
    </ligand>
</feature>
<feature type="binding site" evidence="1">
    <location>
        <position position="126"/>
    </location>
    <ligand>
        <name>L-aspartate</name>
        <dbReference type="ChEBI" id="CHEBI:29991"/>
    </ligand>
</feature>
<feature type="binding site" evidence="1">
    <location>
        <position position="129"/>
    </location>
    <ligand>
        <name>L-citrulline</name>
        <dbReference type="ChEBI" id="CHEBI:57743"/>
    </ligand>
</feature>
<feature type="binding site" evidence="1">
    <location>
        <position position="177"/>
    </location>
    <ligand>
        <name>L-citrulline</name>
        <dbReference type="ChEBI" id="CHEBI:57743"/>
    </ligand>
</feature>
<feature type="binding site" evidence="1">
    <location>
        <position position="261"/>
    </location>
    <ligand>
        <name>L-citrulline</name>
        <dbReference type="ChEBI" id="CHEBI:57743"/>
    </ligand>
</feature>
<feature type="binding site" evidence="1">
    <location>
        <position position="273"/>
    </location>
    <ligand>
        <name>L-citrulline</name>
        <dbReference type="ChEBI" id="CHEBI:57743"/>
    </ligand>
</feature>
<keyword id="KW-0028">Amino-acid biosynthesis</keyword>
<keyword id="KW-0055">Arginine biosynthesis</keyword>
<keyword id="KW-0067">ATP-binding</keyword>
<keyword id="KW-0963">Cytoplasm</keyword>
<keyword id="KW-0436">Ligase</keyword>
<keyword id="KW-0547">Nucleotide-binding</keyword>
<keyword id="KW-1185">Reference proteome</keyword>
<sequence>MADNKRIVLAYSGGLDTSVAISYLKERTGKDVVAVSLDVGQGGESLETIKQRALACGAVESYVVDARDEFANEYCMKALKANAMYEGVYPLVSAISRPLISKHLVRAAHQFGADTISHGCTGKGNDQVRFEVSIASIDPTLKAISPIRDLSLTRDVEIAFAKEHKLPITQTEKSPYSIDQNVWGRAIETGFLEDPWNGPTKDCYSYTDDPAFPPVEDEVVIEFKEGVPVKIDGRDVTPLQAIEEMNRRAGAQGVGRIDLIEDRLVGIKSRELYEAPGAVALITAHQELENCCLEREQHRIKRDIDKRWGELVYDAQWFSPATQSLNAFIEDTQKYVSGEIRMVLHGGRAVVTGRRSDSSLYDYKLATYDSGDTFDQKSSNGFIDIYGLPSRVAAARDVKFGNGIEVPKNTVE</sequence>
<protein>
    <recommendedName>
        <fullName evidence="1">Argininosuccinate synthase</fullName>
        <ecNumber evidence="1">6.3.4.5</ecNumber>
    </recommendedName>
    <alternativeName>
        <fullName evidence="1">Citrulline--aspartate ligase</fullName>
    </alternativeName>
</protein>
<accession>Q8G5F2</accession>
<gene>
    <name evidence="1" type="primary">argG</name>
    <name type="ordered locus">BL1058</name>
</gene>
<reference key="1">
    <citation type="journal article" date="2002" name="Proc. Natl. Acad. Sci. U.S.A.">
        <title>The genome sequence of Bifidobacterium longum reflects its adaptation to the human gastrointestinal tract.</title>
        <authorList>
            <person name="Schell M.A."/>
            <person name="Karmirantzou M."/>
            <person name="Snel B."/>
            <person name="Vilanova D."/>
            <person name="Berger B."/>
            <person name="Pessi G."/>
            <person name="Zwahlen M.-C."/>
            <person name="Desiere F."/>
            <person name="Bork P."/>
            <person name="Delley M."/>
            <person name="Pridmore R.D."/>
            <person name="Arigoni F."/>
        </authorList>
    </citation>
    <scope>NUCLEOTIDE SEQUENCE [LARGE SCALE GENOMIC DNA]</scope>
    <source>
        <strain>NCC 2705</strain>
    </source>
</reference>
<evidence type="ECO:0000255" key="1">
    <source>
        <dbReference type="HAMAP-Rule" id="MF_00005"/>
    </source>
</evidence>
<comment type="catalytic activity">
    <reaction evidence="1">
        <text>L-citrulline + L-aspartate + ATP = 2-(N(omega)-L-arginino)succinate + AMP + diphosphate + H(+)</text>
        <dbReference type="Rhea" id="RHEA:10932"/>
        <dbReference type="ChEBI" id="CHEBI:15378"/>
        <dbReference type="ChEBI" id="CHEBI:29991"/>
        <dbReference type="ChEBI" id="CHEBI:30616"/>
        <dbReference type="ChEBI" id="CHEBI:33019"/>
        <dbReference type="ChEBI" id="CHEBI:57472"/>
        <dbReference type="ChEBI" id="CHEBI:57743"/>
        <dbReference type="ChEBI" id="CHEBI:456215"/>
        <dbReference type="EC" id="6.3.4.5"/>
    </reaction>
</comment>
<comment type="pathway">
    <text evidence="1">Amino-acid biosynthesis; L-arginine biosynthesis; L-arginine from L-ornithine and carbamoyl phosphate: step 2/3.</text>
</comment>
<comment type="subunit">
    <text evidence="1">Homotetramer.</text>
</comment>
<comment type="subcellular location">
    <subcellularLocation>
        <location evidence="1">Cytoplasm</location>
    </subcellularLocation>
</comment>
<comment type="similarity">
    <text evidence="1">Belongs to the argininosuccinate synthase family. Type 1 subfamily.</text>
</comment>
<name>ASSY_BIFLO</name>
<organism>
    <name type="scientific">Bifidobacterium longum (strain NCC 2705)</name>
    <dbReference type="NCBI Taxonomy" id="206672"/>
    <lineage>
        <taxon>Bacteria</taxon>
        <taxon>Bacillati</taxon>
        <taxon>Actinomycetota</taxon>
        <taxon>Actinomycetes</taxon>
        <taxon>Bifidobacteriales</taxon>
        <taxon>Bifidobacteriaceae</taxon>
        <taxon>Bifidobacterium</taxon>
    </lineage>
</organism>
<proteinExistence type="inferred from homology"/>